<protein>
    <recommendedName>
        <fullName evidence="1">Dihydroorotase</fullName>
        <shortName evidence="1">DHOase</shortName>
        <ecNumber evidence="1">3.5.2.3</ecNumber>
    </recommendedName>
</protein>
<feature type="chain" id="PRO_0000147251" description="Dihydroorotase">
    <location>
        <begin position="1"/>
        <end position="424"/>
    </location>
</feature>
<feature type="active site" evidence="1">
    <location>
        <position position="303"/>
    </location>
</feature>
<feature type="binding site" evidence="1">
    <location>
        <position position="58"/>
    </location>
    <ligand>
        <name>Zn(2+)</name>
        <dbReference type="ChEBI" id="CHEBI:29105"/>
        <label>1</label>
    </ligand>
</feature>
<feature type="binding site" evidence="1">
    <location>
        <begin position="60"/>
        <end position="62"/>
    </location>
    <ligand>
        <name>substrate</name>
    </ligand>
</feature>
<feature type="binding site" evidence="1">
    <location>
        <position position="60"/>
    </location>
    <ligand>
        <name>Zn(2+)</name>
        <dbReference type="ChEBI" id="CHEBI:29105"/>
        <label>1</label>
    </ligand>
</feature>
<feature type="binding site" evidence="1">
    <location>
        <position position="92"/>
    </location>
    <ligand>
        <name>substrate</name>
    </ligand>
</feature>
<feature type="binding site" evidence="1">
    <location>
        <position position="150"/>
    </location>
    <ligand>
        <name>Zn(2+)</name>
        <dbReference type="ChEBI" id="CHEBI:29105"/>
        <label>1</label>
    </ligand>
</feature>
<feature type="binding site" evidence="1">
    <location>
        <position position="150"/>
    </location>
    <ligand>
        <name>Zn(2+)</name>
        <dbReference type="ChEBI" id="CHEBI:29105"/>
        <label>2</label>
    </ligand>
</feature>
<feature type="binding site" evidence="1">
    <location>
        <position position="177"/>
    </location>
    <ligand>
        <name>Zn(2+)</name>
        <dbReference type="ChEBI" id="CHEBI:29105"/>
        <label>2</label>
    </ligand>
</feature>
<feature type="binding site" evidence="1">
    <location>
        <position position="230"/>
    </location>
    <ligand>
        <name>Zn(2+)</name>
        <dbReference type="ChEBI" id="CHEBI:29105"/>
        <label>2</label>
    </ligand>
</feature>
<feature type="binding site" evidence="1">
    <location>
        <position position="276"/>
    </location>
    <ligand>
        <name>substrate</name>
    </ligand>
</feature>
<feature type="binding site" evidence="1">
    <location>
        <position position="303"/>
    </location>
    <ligand>
        <name>Zn(2+)</name>
        <dbReference type="ChEBI" id="CHEBI:29105"/>
        <label>1</label>
    </ligand>
</feature>
<feature type="binding site" evidence="1">
    <location>
        <position position="307"/>
    </location>
    <ligand>
        <name>substrate</name>
    </ligand>
</feature>
<feature type="binding site" evidence="1">
    <location>
        <begin position="321"/>
        <end position="322"/>
    </location>
    <ligand>
        <name>substrate</name>
    </ligand>
</feature>
<organism>
    <name type="scientific">Staphylococcus aureus (strain MW2)</name>
    <dbReference type="NCBI Taxonomy" id="196620"/>
    <lineage>
        <taxon>Bacteria</taxon>
        <taxon>Bacillati</taxon>
        <taxon>Bacillota</taxon>
        <taxon>Bacilli</taxon>
        <taxon>Bacillales</taxon>
        <taxon>Staphylococcaceae</taxon>
        <taxon>Staphylococcus</taxon>
    </lineage>
</organism>
<dbReference type="EC" id="3.5.2.3" evidence="1"/>
<dbReference type="EMBL" id="BA000033">
    <property type="protein sequence ID" value="BAB94949.1"/>
    <property type="molecule type" value="Genomic_DNA"/>
</dbReference>
<dbReference type="RefSeq" id="WP_000767028.1">
    <property type="nucleotide sequence ID" value="NC_003923.1"/>
</dbReference>
<dbReference type="SMR" id="P65907"/>
<dbReference type="KEGG" id="sam:MW1084"/>
<dbReference type="HOGENOM" id="CLU_015572_1_0_9"/>
<dbReference type="BRENDA" id="3.5.2.3">
    <property type="organism ID" value="3352"/>
</dbReference>
<dbReference type="UniPathway" id="UPA00070">
    <property type="reaction ID" value="UER00117"/>
</dbReference>
<dbReference type="EvolutionaryTrace" id="P65907"/>
<dbReference type="GO" id="GO:0005737">
    <property type="term" value="C:cytoplasm"/>
    <property type="evidence" value="ECO:0007669"/>
    <property type="project" value="TreeGrafter"/>
</dbReference>
<dbReference type="GO" id="GO:0004038">
    <property type="term" value="F:allantoinase activity"/>
    <property type="evidence" value="ECO:0007669"/>
    <property type="project" value="TreeGrafter"/>
</dbReference>
<dbReference type="GO" id="GO:0004151">
    <property type="term" value="F:dihydroorotase activity"/>
    <property type="evidence" value="ECO:0007669"/>
    <property type="project" value="UniProtKB-UniRule"/>
</dbReference>
<dbReference type="GO" id="GO:0008270">
    <property type="term" value="F:zinc ion binding"/>
    <property type="evidence" value="ECO:0007669"/>
    <property type="project" value="UniProtKB-UniRule"/>
</dbReference>
<dbReference type="GO" id="GO:0044205">
    <property type="term" value="P:'de novo' UMP biosynthetic process"/>
    <property type="evidence" value="ECO:0007669"/>
    <property type="project" value="UniProtKB-UniRule"/>
</dbReference>
<dbReference type="GO" id="GO:0006145">
    <property type="term" value="P:purine nucleobase catabolic process"/>
    <property type="evidence" value="ECO:0007669"/>
    <property type="project" value="TreeGrafter"/>
</dbReference>
<dbReference type="CDD" id="cd01317">
    <property type="entry name" value="DHOase_IIa"/>
    <property type="match status" value="1"/>
</dbReference>
<dbReference type="Gene3D" id="3.20.20.140">
    <property type="entry name" value="Metal-dependent hydrolases"/>
    <property type="match status" value="1"/>
</dbReference>
<dbReference type="Gene3D" id="2.30.40.10">
    <property type="entry name" value="Urease, subunit C, domain 1"/>
    <property type="match status" value="2"/>
</dbReference>
<dbReference type="HAMAP" id="MF_00220_B">
    <property type="entry name" value="PyrC_classI_B"/>
    <property type="match status" value="1"/>
</dbReference>
<dbReference type="InterPro" id="IPR006680">
    <property type="entry name" value="Amidohydro-rel"/>
</dbReference>
<dbReference type="InterPro" id="IPR004722">
    <property type="entry name" value="DHOase"/>
</dbReference>
<dbReference type="InterPro" id="IPR050138">
    <property type="entry name" value="DHOase/Allantoinase_Hydrolase"/>
</dbReference>
<dbReference type="InterPro" id="IPR002195">
    <property type="entry name" value="Dihydroorotase_CS"/>
</dbReference>
<dbReference type="InterPro" id="IPR011059">
    <property type="entry name" value="Metal-dep_hydrolase_composite"/>
</dbReference>
<dbReference type="InterPro" id="IPR032466">
    <property type="entry name" value="Metal_Hydrolase"/>
</dbReference>
<dbReference type="NCBIfam" id="NF006837">
    <property type="entry name" value="PRK09357.1-2"/>
    <property type="match status" value="1"/>
</dbReference>
<dbReference type="NCBIfam" id="TIGR00857">
    <property type="entry name" value="pyrC_multi"/>
    <property type="match status" value="1"/>
</dbReference>
<dbReference type="PANTHER" id="PTHR43668">
    <property type="entry name" value="ALLANTOINASE"/>
    <property type="match status" value="1"/>
</dbReference>
<dbReference type="PANTHER" id="PTHR43668:SF2">
    <property type="entry name" value="ALLANTOINASE"/>
    <property type="match status" value="1"/>
</dbReference>
<dbReference type="Pfam" id="PF01979">
    <property type="entry name" value="Amidohydro_1"/>
    <property type="match status" value="1"/>
</dbReference>
<dbReference type="SUPFAM" id="SSF51338">
    <property type="entry name" value="Composite domain of metallo-dependent hydrolases"/>
    <property type="match status" value="1"/>
</dbReference>
<dbReference type="SUPFAM" id="SSF51556">
    <property type="entry name" value="Metallo-dependent hydrolases"/>
    <property type="match status" value="1"/>
</dbReference>
<dbReference type="PROSITE" id="PS00482">
    <property type="entry name" value="DIHYDROOROTASE_1"/>
    <property type="match status" value="1"/>
</dbReference>
<dbReference type="PROSITE" id="PS00483">
    <property type="entry name" value="DIHYDROOROTASE_2"/>
    <property type="match status" value="1"/>
</dbReference>
<name>PYRC_STAAW</name>
<reference key="1">
    <citation type="journal article" date="2002" name="Lancet">
        <title>Genome and virulence determinants of high virulence community-acquired MRSA.</title>
        <authorList>
            <person name="Baba T."/>
            <person name="Takeuchi F."/>
            <person name="Kuroda M."/>
            <person name="Yuzawa H."/>
            <person name="Aoki K."/>
            <person name="Oguchi A."/>
            <person name="Nagai Y."/>
            <person name="Iwama N."/>
            <person name="Asano K."/>
            <person name="Naimi T."/>
            <person name="Kuroda H."/>
            <person name="Cui L."/>
            <person name="Yamamoto K."/>
            <person name="Hiramatsu K."/>
        </authorList>
    </citation>
    <scope>NUCLEOTIDE SEQUENCE [LARGE SCALE GENOMIC DNA]</scope>
    <source>
        <strain>MW2</strain>
    </source>
</reference>
<proteinExistence type="inferred from homology"/>
<comment type="function">
    <text evidence="1">Catalyzes the reversible cyclization of carbamoyl aspartate to dihydroorotate.</text>
</comment>
<comment type="catalytic activity">
    <reaction evidence="1">
        <text>(S)-dihydroorotate + H2O = N-carbamoyl-L-aspartate + H(+)</text>
        <dbReference type="Rhea" id="RHEA:24296"/>
        <dbReference type="ChEBI" id="CHEBI:15377"/>
        <dbReference type="ChEBI" id="CHEBI:15378"/>
        <dbReference type="ChEBI" id="CHEBI:30864"/>
        <dbReference type="ChEBI" id="CHEBI:32814"/>
        <dbReference type="EC" id="3.5.2.3"/>
    </reaction>
</comment>
<comment type="cofactor">
    <cofactor evidence="1">
        <name>Zn(2+)</name>
        <dbReference type="ChEBI" id="CHEBI:29105"/>
    </cofactor>
    <text evidence="1">Binds 2 Zn(2+) ions per subunit.</text>
</comment>
<comment type="pathway">
    <text evidence="1">Pyrimidine metabolism; UMP biosynthesis via de novo pathway; (S)-dihydroorotate from bicarbonate: step 3/3.</text>
</comment>
<comment type="similarity">
    <text evidence="1">Belongs to the metallo-dependent hydrolases superfamily. DHOase family. Class I DHOase subfamily.</text>
</comment>
<accession>P65907</accession>
<accession>Q99UR7</accession>
<gene>
    <name evidence="1" type="primary">pyrC</name>
    <name type="ordered locus">MW1084</name>
</gene>
<sequence length="424" mass="46372">MKLIKNGKVLQNGELQQADILIDGKVIKQIAPAIEPSNGVDIIDAKGHFVSPGFVDVHVHLREPGGEYKETIETGTKAAARGGFTTVCPMPNTRPVPDSVEHFEALQKLIDDNAQVRVLPYASITTRQLGKELVDFPALVKEGAFAFTDDGVGVQTASMMYEGMIEAAKVNKAIVAHCEDNSLIYGGAMHEGKRSKELGIPGIPNICESVQIARDVLLAEAAGCHYHVCHVSTKESVRVIRDAKRAGIHVTAEVTPHHLLLTEDDIPGNNAIYKMNPPLRSTEDREALLEGLLDGTIDCIATDHAPHARDEKAQPMEKAPFGIVGSETAFPLLYTHFVKNGDWTLQQLVDYLTIKPCETFNLEYGTLKENGYADLTIIDLDSEQEIKGEDFLSKADNTPFIGYKVYGNPILTMVEGEVKFEGDK</sequence>
<keyword id="KW-0378">Hydrolase</keyword>
<keyword id="KW-0479">Metal-binding</keyword>
<keyword id="KW-0665">Pyrimidine biosynthesis</keyword>
<keyword id="KW-0862">Zinc</keyword>
<evidence type="ECO:0000255" key="1">
    <source>
        <dbReference type="HAMAP-Rule" id="MF_00220"/>
    </source>
</evidence>